<protein>
    <recommendedName>
        <fullName evidence="3">3-oxo-tetronate kinase</fullName>
        <ecNumber evidence="2">2.7.1.217</ecNumber>
    </recommendedName>
    <alternativeName>
        <fullName evidence="4">3-dehydrotetronate 4-kinase</fullName>
    </alternativeName>
</protein>
<reference key="1">
    <citation type="journal article" date="2010" name="BMC Genomics">
        <title>A genomic perspective on the potential of Actinobacillus succinogenes for industrial succinate production.</title>
        <authorList>
            <person name="McKinlay J.B."/>
            <person name="Laivenieks M."/>
            <person name="Schindler B.D."/>
            <person name="McKinlay A.A."/>
            <person name="Siddaramappa S."/>
            <person name="Challacombe J.F."/>
            <person name="Lowry S.R."/>
            <person name="Clum A."/>
            <person name="Lapidus A.L."/>
            <person name="Burkhart K.B."/>
            <person name="Harkins V."/>
            <person name="Vieille C."/>
        </authorList>
    </citation>
    <scope>NUCLEOTIDE SEQUENCE [LARGE SCALE GENOMIC DNA]</scope>
    <source>
        <strain>ATCC 55618 / DSM 22257 / CCUG 43843 / 130Z</strain>
    </source>
</reference>
<reference key="2">
    <citation type="journal article" date="2016" name="Proc. Natl. Acad. Sci. U.S.A.">
        <title>Assignment of function to a domain of unknown function: DUF1537 is a new kinase family in catabolic pathways for acid sugars.</title>
        <authorList>
            <person name="Zhang X."/>
            <person name="Carter M.S."/>
            <person name="Vetting M.W."/>
            <person name="San Francisco B."/>
            <person name="Zhao S."/>
            <person name="Al-Obaidi N.F."/>
            <person name="Solbiati J.O."/>
            <person name="Thiaville J.J."/>
            <person name="de Crecy-Lagard V."/>
            <person name="Jacobson M.P."/>
            <person name="Almo S.C."/>
            <person name="Gerlt J.A."/>
        </authorList>
    </citation>
    <scope>FUNCTION</scope>
    <scope>CATALYTIC ACTIVITY</scope>
    <source>
        <strain>ATCC 55618 / DSM 22257 / CCUG 43843 / 130Z</strain>
    </source>
</reference>
<sequence>MMLGVIADDFTGASDIASFLVENGLSAVQMNGVPKQPLNSRVDAIVISLKSRSNPANEAVEQSLNAYNWLQENGCTQFYFKYCSTFDSTAKGNIGPVTDALLEALNEDFTVITPALPVNGRTIFNGYLFVGEQLLSESGMKNHPITPMTDANLMRLMDAQAKGKTGLVAYADVIQGAARVKERFAELKAQGYRYAVVDAADNSQLEVLAEAVAGLKLVTGGSGLGAYIAARLSGGKKGTNAFTPTKGKTVVLSGSCSVMTNKQVEKYCEKAPHFQLDAAQAINNPNYAEELYQWVTANLDAPLAPMVYATVPPEALKAIQNEFGADKASHAIENTFAQLAAKLKRYGVTNFINAGGETSSIVVQQLGFSGFHIGKQIAPGVPWLKAVEEDIYLALKSGNFGKEDFFEYAQGMFV</sequence>
<dbReference type="EC" id="2.7.1.217" evidence="2"/>
<dbReference type="EMBL" id="CP000746">
    <property type="protein sequence ID" value="ABR73502.1"/>
    <property type="molecule type" value="Genomic_DNA"/>
</dbReference>
<dbReference type="SMR" id="A6VKK5"/>
<dbReference type="STRING" id="339671.Asuc_0122"/>
<dbReference type="KEGG" id="asu:Asuc_0122"/>
<dbReference type="eggNOG" id="COG3395">
    <property type="taxonomic scope" value="Bacteria"/>
</dbReference>
<dbReference type="HOGENOM" id="CLU_029424_1_0_6"/>
<dbReference type="Proteomes" id="UP000001114">
    <property type="component" value="Chromosome"/>
</dbReference>
<dbReference type="GO" id="GO:0005524">
    <property type="term" value="F:ATP binding"/>
    <property type="evidence" value="ECO:0007669"/>
    <property type="project" value="UniProtKB-KW"/>
</dbReference>
<dbReference type="GO" id="GO:0016301">
    <property type="term" value="F:kinase activity"/>
    <property type="evidence" value="ECO:0007669"/>
    <property type="project" value="UniProtKB-KW"/>
</dbReference>
<dbReference type="Gene3D" id="3.40.980.20">
    <property type="entry name" value="Four-carbon acid sugar kinase, nucleotide binding domain"/>
    <property type="match status" value="1"/>
</dbReference>
<dbReference type="Gene3D" id="3.40.50.10840">
    <property type="entry name" value="Putative sugar-binding, N-terminal domain"/>
    <property type="match status" value="1"/>
</dbReference>
<dbReference type="InterPro" id="IPR010737">
    <property type="entry name" value="4-carb_acid_sugar_kinase_N"/>
</dbReference>
<dbReference type="InterPro" id="IPR037051">
    <property type="entry name" value="4-carb_acid_sugar_kinase_N_sf"/>
</dbReference>
<dbReference type="InterPro" id="IPR031475">
    <property type="entry name" value="NBD_C"/>
</dbReference>
<dbReference type="InterPro" id="IPR042213">
    <property type="entry name" value="NBD_C_sf"/>
</dbReference>
<dbReference type="InterPro" id="IPR050007">
    <property type="entry name" value="OtnK"/>
</dbReference>
<dbReference type="NCBIfam" id="NF043035">
    <property type="entry name" value="OxoTetrKin"/>
    <property type="match status" value="1"/>
</dbReference>
<dbReference type="Pfam" id="PF17042">
    <property type="entry name" value="NBD_C"/>
    <property type="match status" value="1"/>
</dbReference>
<dbReference type="Pfam" id="PF07005">
    <property type="entry name" value="SBD_N"/>
    <property type="match status" value="1"/>
</dbReference>
<dbReference type="SUPFAM" id="SSF142764">
    <property type="entry name" value="YgbK-like"/>
    <property type="match status" value="1"/>
</dbReference>
<organism>
    <name type="scientific">Actinobacillus succinogenes (strain ATCC 55618 / DSM 22257 / CCUG 43843 / 130Z)</name>
    <dbReference type="NCBI Taxonomy" id="339671"/>
    <lineage>
        <taxon>Bacteria</taxon>
        <taxon>Pseudomonadati</taxon>
        <taxon>Pseudomonadota</taxon>
        <taxon>Gammaproteobacteria</taxon>
        <taxon>Pasteurellales</taxon>
        <taxon>Pasteurellaceae</taxon>
        <taxon>Actinobacillus</taxon>
    </lineage>
</organism>
<proteinExistence type="evidence at protein level"/>
<keyword id="KW-0067">ATP-binding</keyword>
<keyword id="KW-0119">Carbohydrate metabolism</keyword>
<keyword id="KW-0418">Kinase</keyword>
<keyword id="KW-0547">Nucleotide-binding</keyword>
<keyword id="KW-1185">Reference proteome</keyword>
<keyword id="KW-0808">Transferase</keyword>
<name>OTNK_ACTSZ</name>
<accession>A6VKK5</accession>
<evidence type="ECO:0000250" key="1">
    <source>
        <dbReference type="UniProtKB" id="Q0KBC8"/>
    </source>
</evidence>
<evidence type="ECO:0000269" key="2">
    <source>
    </source>
</evidence>
<evidence type="ECO:0000303" key="3">
    <source>
    </source>
</evidence>
<evidence type="ECO:0000305" key="4"/>
<evidence type="ECO:0000312" key="5">
    <source>
        <dbReference type="EMBL" id="ABR73502.1"/>
    </source>
</evidence>
<gene>
    <name evidence="3" type="primary">otnK</name>
    <name evidence="5" type="ordered locus">Asuc_0122</name>
</gene>
<feature type="chain" id="PRO_0000439678" description="3-oxo-tetronate kinase">
    <location>
        <begin position="1"/>
        <end position="414"/>
    </location>
</feature>
<feature type="binding site" evidence="1">
    <location>
        <position position="255"/>
    </location>
    <ligand>
        <name>ATP</name>
        <dbReference type="ChEBI" id="CHEBI:30616"/>
    </ligand>
</feature>
<feature type="binding site" evidence="1">
    <location>
        <begin position="355"/>
        <end position="358"/>
    </location>
    <ligand>
        <name>ATP</name>
        <dbReference type="ChEBI" id="CHEBI:30616"/>
    </ligand>
</feature>
<feature type="binding site" evidence="1">
    <location>
        <position position="398"/>
    </location>
    <ligand>
        <name>ATP</name>
        <dbReference type="ChEBI" id="CHEBI:30616"/>
    </ligand>
</feature>
<comment type="function">
    <text evidence="2">Catalyzes the ATP-dependent phosphorylation of 3-oxo-tetronate to 3-oxo-tetronate 4-phosphate.</text>
</comment>
<comment type="catalytic activity">
    <reaction evidence="2">
        <text>3-dehydro-L-erythronate + ATP = 3-dehydro-4-O-phospho-L-erythronate + ADP + H(+)</text>
        <dbReference type="Rhea" id="RHEA:52552"/>
        <dbReference type="ChEBI" id="CHEBI:15378"/>
        <dbReference type="ChEBI" id="CHEBI:30616"/>
        <dbReference type="ChEBI" id="CHEBI:136592"/>
        <dbReference type="ChEBI" id="CHEBI:136670"/>
        <dbReference type="ChEBI" id="CHEBI:456216"/>
        <dbReference type="EC" id="2.7.1.217"/>
    </reaction>
</comment>
<comment type="catalytic activity">
    <reaction evidence="2">
        <text>3-dehydro-D-erythronate + ATP = 3-dehydro-4-O-phospho-D-erythronate + ADP + H(+)</text>
        <dbReference type="Rhea" id="RHEA:52556"/>
        <dbReference type="ChEBI" id="CHEBI:15378"/>
        <dbReference type="ChEBI" id="CHEBI:30616"/>
        <dbReference type="ChEBI" id="CHEBI:57958"/>
        <dbReference type="ChEBI" id="CHEBI:136593"/>
        <dbReference type="ChEBI" id="CHEBI:456216"/>
        <dbReference type="EC" id="2.7.1.217"/>
    </reaction>
</comment>
<comment type="similarity">
    <text evidence="4">Belongs to the four-carbon acid sugar kinase family.</text>
</comment>